<reference key="1">
    <citation type="journal article" date="2004" name="Proc. Natl. Acad. Sci. U.S.A.">
        <title>Complete genomes of two clinical Staphylococcus aureus strains: evidence for the rapid evolution of virulence and drug resistance.</title>
        <authorList>
            <person name="Holden M.T.G."/>
            <person name="Feil E.J."/>
            <person name="Lindsay J.A."/>
            <person name="Peacock S.J."/>
            <person name="Day N.P.J."/>
            <person name="Enright M.C."/>
            <person name="Foster T.J."/>
            <person name="Moore C.E."/>
            <person name="Hurst L."/>
            <person name="Atkin R."/>
            <person name="Barron A."/>
            <person name="Bason N."/>
            <person name="Bentley S.D."/>
            <person name="Chillingworth C."/>
            <person name="Chillingworth T."/>
            <person name="Churcher C."/>
            <person name="Clark L."/>
            <person name="Corton C."/>
            <person name="Cronin A."/>
            <person name="Doggett J."/>
            <person name="Dowd L."/>
            <person name="Feltwell T."/>
            <person name="Hance Z."/>
            <person name="Harris B."/>
            <person name="Hauser H."/>
            <person name="Holroyd S."/>
            <person name="Jagels K."/>
            <person name="James K.D."/>
            <person name="Lennard N."/>
            <person name="Line A."/>
            <person name="Mayes R."/>
            <person name="Moule S."/>
            <person name="Mungall K."/>
            <person name="Ormond D."/>
            <person name="Quail M.A."/>
            <person name="Rabbinowitsch E."/>
            <person name="Rutherford K.M."/>
            <person name="Sanders M."/>
            <person name="Sharp S."/>
            <person name="Simmonds M."/>
            <person name="Stevens K."/>
            <person name="Whitehead S."/>
            <person name="Barrell B.G."/>
            <person name="Spratt B.G."/>
            <person name="Parkhill J."/>
        </authorList>
    </citation>
    <scope>NUCLEOTIDE SEQUENCE [LARGE SCALE GENOMIC DNA]</scope>
    <source>
        <strain>MSSA476</strain>
    </source>
</reference>
<name>Y2373_STAAS</name>
<gene>
    <name type="ordered locus">SAS2373</name>
</gene>
<dbReference type="EMBL" id="BX571857">
    <property type="protein sequence ID" value="CAG44187.1"/>
    <property type="molecule type" value="Genomic_DNA"/>
</dbReference>
<dbReference type="RefSeq" id="WP_001826866.1">
    <property type="nucleotide sequence ID" value="NC_002953.3"/>
</dbReference>
<dbReference type="SMR" id="Q6G6I8"/>
<dbReference type="KEGG" id="sas:SAS2373"/>
<dbReference type="HOGENOM" id="CLU_071589_0_1_9"/>
<dbReference type="GO" id="GO:0005886">
    <property type="term" value="C:plasma membrane"/>
    <property type="evidence" value="ECO:0007669"/>
    <property type="project" value="UniProtKB-SubCell"/>
</dbReference>
<dbReference type="Gene3D" id="2.50.20.40">
    <property type="match status" value="1"/>
</dbReference>
<dbReference type="InterPro" id="IPR007595">
    <property type="entry name" value="Csa"/>
</dbReference>
<dbReference type="InterPro" id="IPR038641">
    <property type="entry name" value="Csa_sf"/>
</dbReference>
<dbReference type="NCBIfam" id="TIGR01742">
    <property type="entry name" value="SA_tandem_lipo"/>
    <property type="match status" value="1"/>
</dbReference>
<dbReference type="Pfam" id="PF04507">
    <property type="entry name" value="DUF576"/>
    <property type="match status" value="1"/>
</dbReference>
<dbReference type="PROSITE" id="PS51257">
    <property type="entry name" value="PROKAR_LIPOPROTEIN"/>
    <property type="match status" value="1"/>
</dbReference>
<feature type="signal peptide" evidence="1">
    <location>
        <begin position="1"/>
        <end position="22"/>
    </location>
</feature>
<feature type="chain" id="PRO_0000282163" description="Uncharacterized lipoprotein SAS2373">
    <location>
        <begin position="23"/>
        <end position="271"/>
    </location>
</feature>
<feature type="lipid moiety-binding region" description="N-palmitoyl cysteine" evidence="1">
    <location>
        <position position="23"/>
    </location>
</feature>
<feature type="lipid moiety-binding region" description="S-diacylglycerol cysteine" evidence="1">
    <location>
        <position position="23"/>
    </location>
</feature>
<evidence type="ECO:0000255" key="1">
    <source>
        <dbReference type="PROSITE-ProRule" id="PRU00303"/>
    </source>
</evidence>
<evidence type="ECO:0000305" key="2"/>
<organism>
    <name type="scientific">Staphylococcus aureus (strain MSSA476)</name>
    <dbReference type="NCBI Taxonomy" id="282459"/>
    <lineage>
        <taxon>Bacteria</taxon>
        <taxon>Bacillati</taxon>
        <taxon>Bacillota</taxon>
        <taxon>Bacilli</taxon>
        <taxon>Bacillales</taxon>
        <taxon>Staphylococcaceae</taxon>
        <taxon>Staphylococcus</taxon>
    </lineage>
</organism>
<sequence>MIHSKRLKLCLCLIILSVFIGACGMKKEESSKDKQIKENFNKILSLYPTKNLEDFYDKEGFRDEEFEKGDKGTWIIHSKMIIETNNSNMESRGMVLYINRNTRTTKGNFVVREITEDSKGYSHSKDTKYPVKMEHNRIIPTKPIADDKLRKEIENFKFFVQYGDFKDINDYKDGDISYNPNVPSYSAKYQLSNDDYNVKQLRKRYNIPTNKAPKLLLKGDGDLKGSSVGSKNLEFTFVENKEENIYFTDSVQYTPSEDTSYESNGISNKSW</sequence>
<protein>
    <recommendedName>
        <fullName>Uncharacterized lipoprotein SAS2373</fullName>
    </recommendedName>
</protein>
<proteinExistence type="inferred from homology"/>
<keyword id="KW-1003">Cell membrane</keyword>
<keyword id="KW-0449">Lipoprotein</keyword>
<keyword id="KW-0472">Membrane</keyword>
<keyword id="KW-0564">Palmitate</keyword>
<keyword id="KW-0732">Signal</keyword>
<comment type="subcellular location">
    <subcellularLocation>
        <location evidence="1">Cell membrane</location>
        <topology evidence="1">Lipid-anchor</topology>
    </subcellularLocation>
</comment>
<comment type="similarity">
    <text evidence="2">Belongs to the staphylococcal tandem lipoprotein family.</text>
</comment>
<accession>Q6G6I8</accession>